<organism>
    <name type="scientific">Streptomyces avermitilis (strain ATCC 31267 / DSM 46492 / JCM 5070 / NBRC 14893 / NCIMB 12804 / NRRL 8165 / MA-4680)</name>
    <dbReference type="NCBI Taxonomy" id="227882"/>
    <lineage>
        <taxon>Bacteria</taxon>
        <taxon>Bacillati</taxon>
        <taxon>Actinomycetota</taxon>
        <taxon>Actinomycetes</taxon>
        <taxon>Kitasatosporales</taxon>
        <taxon>Streptomycetaceae</taxon>
        <taxon>Streptomyces</taxon>
    </lineage>
</organism>
<feature type="chain" id="PRO_0000210045" description="UPF0337 protein SAV_738">
    <location>
        <begin position="1"/>
        <end position="58"/>
    </location>
</feature>
<feature type="region of interest" description="Disordered" evidence="1">
    <location>
        <begin position="1"/>
        <end position="58"/>
    </location>
</feature>
<feature type="compositionally biased region" description="Basic and acidic residues" evidence="1">
    <location>
        <begin position="31"/>
        <end position="58"/>
    </location>
</feature>
<accession>Q82PY3</accession>
<comment type="similarity">
    <text evidence="2">Belongs to the UPF0337 (CsbD) family.</text>
</comment>
<sequence length="58" mass="5990">MAADEKAQANGEQAKGKVKKVVGGAAGNESLKGKGHAEESKGDLRAAKEKAKDAIKRK</sequence>
<protein>
    <recommendedName>
        <fullName>UPF0337 protein SAV_738</fullName>
    </recommendedName>
</protein>
<proteinExistence type="inferred from homology"/>
<reference key="1">
    <citation type="journal article" date="2001" name="Proc. Natl. Acad. Sci. U.S.A.">
        <title>Genome sequence of an industrial microorganism Streptomyces avermitilis: deducing the ability of producing secondary metabolites.</title>
        <authorList>
            <person name="Omura S."/>
            <person name="Ikeda H."/>
            <person name="Ishikawa J."/>
            <person name="Hanamoto A."/>
            <person name="Takahashi C."/>
            <person name="Shinose M."/>
            <person name="Takahashi Y."/>
            <person name="Horikawa H."/>
            <person name="Nakazawa H."/>
            <person name="Osonoe T."/>
            <person name="Kikuchi H."/>
            <person name="Shiba T."/>
            <person name="Sakaki Y."/>
            <person name="Hattori M."/>
        </authorList>
    </citation>
    <scope>NUCLEOTIDE SEQUENCE [LARGE SCALE GENOMIC DNA]</scope>
    <source>
        <strain>ATCC 31267 / DSM 46492 / JCM 5070 / NBRC 14893 / NCIMB 12804 / NRRL 8165 / MA-4680</strain>
    </source>
</reference>
<reference key="2">
    <citation type="journal article" date="2003" name="Nat. Biotechnol.">
        <title>Complete genome sequence and comparative analysis of the industrial microorganism Streptomyces avermitilis.</title>
        <authorList>
            <person name="Ikeda H."/>
            <person name="Ishikawa J."/>
            <person name="Hanamoto A."/>
            <person name="Shinose M."/>
            <person name="Kikuchi H."/>
            <person name="Shiba T."/>
            <person name="Sakaki Y."/>
            <person name="Hattori M."/>
            <person name="Omura S."/>
        </authorList>
    </citation>
    <scope>NUCLEOTIDE SEQUENCE [LARGE SCALE GENOMIC DNA]</scope>
    <source>
        <strain>ATCC 31267 / DSM 46492 / JCM 5070 / NBRC 14893 / NCIMB 12804 / NRRL 8165 / MA-4680</strain>
    </source>
</reference>
<name>Y738_STRAW</name>
<gene>
    <name type="ordered locus">SAV_738</name>
</gene>
<keyword id="KW-1185">Reference proteome</keyword>
<dbReference type="EMBL" id="BA000030">
    <property type="protein sequence ID" value="BAC68448.1"/>
    <property type="molecule type" value="Genomic_DNA"/>
</dbReference>
<dbReference type="RefSeq" id="WP_010982176.1">
    <property type="nucleotide sequence ID" value="NZ_JZJK01000088.1"/>
</dbReference>
<dbReference type="SMR" id="Q82PY3"/>
<dbReference type="GeneID" id="41544634"/>
<dbReference type="KEGG" id="sma:SAVERM_738"/>
<dbReference type="HOGENOM" id="CLU_135567_1_1_11"/>
<dbReference type="Proteomes" id="UP000000428">
    <property type="component" value="Chromosome"/>
</dbReference>
<dbReference type="InterPro" id="IPR008462">
    <property type="entry name" value="CsbD"/>
</dbReference>
<dbReference type="InterPro" id="IPR036629">
    <property type="entry name" value="YjbJ_sf"/>
</dbReference>
<dbReference type="Pfam" id="PF05532">
    <property type="entry name" value="CsbD"/>
    <property type="match status" value="1"/>
</dbReference>
<dbReference type="SUPFAM" id="SSF69047">
    <property type="entry name" value="Hypothetical protein YjbJ"/>
    <property type="match status" value="1"/>
</dbReference>
<evidence type="ECO:0000256" key="1">
    <source>
        <dbReference type="SAM" id="MobiDB-lite"/>
    </source>
</evidence>
<evidence type="ECO:0000305" key="2"/>